<organism>
    <name type="scientific">Lachancea thermotolerans (strain ATCC 56472 / CBS 6340 / NRRL Y-8284)</name>
    <name type="common">Yeast</name>
    <name type="synonym">Kluyveromyces thermotolerans</name>
    <dbReference type="NCBI Taxonomy" id="559295"/>
    <lineage>
        <taxon>Eukaryota</taxon>
        <taxon>Fungi</taxon>
        <taxon>Dikarya</taxon>
        <taxon>Ascomycota</taxon>
        <taxon>Saccharomycotina</taxon>
        <taxon>Saccharomycetes</taxon>
        <taxon>Saccharomycetales</taxon>
        <taxon>Saccharomycetaceae</taxon>
        <taxon>Lachancea</taxon>
    </lineage>
</organism>
<proteinExistence type="inferred from homology"/>
<evidence type="ECO:0000250" key="1"/>
<evidence type="ECO:0000305" key="2"/>
<reference key="1">
    <citation type="journal article" date="2009" name="Genome Res.">
        <title>Comparative genomics of protoploid Saccharomycetaceae.</title>
        <authorList>
            <consortium name="The Genolevures Consortium"/>
            <person name="Souciet J.-L."/>
            <person name="Dujon B."/>
            <person name="Gaillardin C."/>
            <person name="Johnston M."/>
            <person name="Baret P.V."/>
            <person name="Cliften P."/>
            <person name="Sherman D.J."/>
            <person name="Weissenbach J."/>
            <person name="Westhof E."/>
            <person name="Wincker P."/>
            <person name="Jubin C."/>
            <person name="Poulain J."/>
            <person name="Barbe V."/>
            <person name="Segurens B."/>
            <person name="Artiguenave F."/>
            <person name="Anthouard V."/>
            <person name="Vacherie B."/>
            <person name="Val M.-E."/>
            <person name="Fulton R.S."/>
            <person name="Minx P."/>
            <person name="Wilson R."/>
            <person name="Durrens P."/>
            <person name="Jean G."/>
            <person name="Marck C."/>
            <person name="Martin T."/>
            <person name="Nikolski M."/>
            <person name="Rolland T."/>
            <person name="Seret M.-L."/>
            <person name="Casaregola S."/>
            <person name="Despons L."/>
            <person name="Fairhead C."/>
            <person name="Fischer G."/>
            <person name="Lafontaine I."/>
            <person name="Leh V."/>
            <person name="Lemaire M."/>
            <person name="de Montigny J."/>
            <person name="Neuveglise C."/>
            <person name="Thierry A."/>
            <person name="Blanc-Lenfle I."/>
            <person name="Bleykasten C."/>
            <person name="Diffels J."/>
            <person name="Fritsch E."/>
            <person name="Frangeul L."/>
            <person name="Goeffon A."/>
            <person name="Jauniaux N."/>
            <person name="Kachouri-Lafond R."/>
            <person name="Payen C."/>
            <person name="Potier S."/>
            <person name="Pribylova L."/>
            <person name="Ozanne C."/>
            <person name="Richard G.-F."/>
            <person name="Sacerdot C."/>
            <person name="Straub M.-L."/>
            <person name="Talla E."/>
        </authorList>
    </citation>
    <scope>NUCLEOTIDE SEQUENCE [LARGE SCALE GENOMIC DNA]</scope>
    <source>
        <strain>ATCC 56472 / CBS 6340 / NRRL Y-8284</strain>
    </source>
</reference>
<name>RRG7_LACTC</name>
<gene>
    <name type="primary">RRG7</name>
    <name type="ordered locus">KLTH0H15224g</name>
</gene>
<sequence>MPRNGAACFKRLAHNLAIRKYLQNNIAIADSTVFQGTLYEHTVVRELSEKLLVKNLEVCGGSYDGGIDIRGKWPVDQIFKTARERFDLSAEFPKKASVNGAQFKPVRHKLDSKSPFRPLNVLVQCKAFKNAKITGKEIRESMGAFSSCVPASRRTQYVLMLSSPNMLTRDGLNVMNGLAIPLVYIRVEMLKSHQGWFDLENSGKLQNYYENEFASKFLQNCGVSQWLKFKLYQSLSQEAVSKTAGGLSGLEASNVN</sequence>
<comment type="subcellular location">
    <subcellularLocation>
        <location evidence="1">Mitochondrion</location>
    </subcellularLocation>
</comment>
<comment type="similarity">
    <text evidence="2">Belongs to the RRG7 family.</text>
</comment>
<keyword id="KW-0496">Mitochondrion</keyword>
<keyword id="KW-1185">Reference proteome</keyword>
<accession>C5E3P3</accession>
<feature type="chain" id="PRO_0000405457" description="Required for respiratory growth protein 7, mitochondrial">
    <location>
        <begin position="1"/>
        <end position="256"/>
    </location>
</feature>
<protein>
    <recommendedName>
        <fullName>Required for respiratory growth protein 7, mitochondrial</fullName>
    </recommendedName>
</protein>
<dbReference type="EMBL" id="CU928180">
    <property type="protein sequence ID" value="CAR30654.1"/>
    <property type="molecule type" value="Genomic_DNA"/>
</dbReference>
<dbReference type="RefSeq" id="XP_002556516.1">
    <property type="nucleotide sequence ID" value="XM_002556470.1"/>
</dbReference>
<dbReference type="FunCoup" id="C5E3P3">
    <property type="interactions" value="55"/>
</dbReference>
<dbReference type="GeneID" id="8294881"/>
<dbReference type="KEGG" id="lth:KLTH0H15224g"/>
<dbReference type="eggNOG" id="ENOG502RZ1Q">
    <property type="taxonomic scope" value="Eukaryota"/>
</dbReference>
<dbReference type="HOGENOM" id="CLU_085105_1_0_1"/>
<dbReference type="InParanoid" id="C5E3P3"/>
<dbReference type="OMA" id="YYENEYA"/>
<dbReference type="OrthoDB" id="20734at2759"/>
<dbReference type="Proteomes" id="UP000002036">
    <property type="component" value="Chromosome H"/>
</dbReference>
<dbReference type="GO" id="GO:0005739">
    <property type="term" value="C:mitochondrion"/>
    <property type="evidence" value="ECO:0007669"/>
    <property type="project" value="UniProtKB-SubCell"/>
</dbReference>
<dbReference type="GO" id="GO:0003676">
    <property type="term" value="F:nucleic acid binding"/>
    <property type="evidence" value="ECO:0007669"/>
    <property type="project" value="InterPro"/>
</dbReference>
<dbReference type="Gene3D" id="3.40.1350.10">
    <property type="match status" value="1"/>
</dbReference>
<dbReference type="InterPro" id="IPR018828">
    <property type="entry name" value="RRG7"/>
</dbReference>
<dbReference type="InterPro" id="IPR011856">
    <property type="entry name" value="tRNA_endonuc-like_dom_sf"/>
</dbReference>
<dbReference type="PANTHER" id="PTHR28133">
    <property type="entry name" value="REQUIRED FOR RESPIRATORY GROWTH PROTEIN 7, MITOCHONDRIAL"/>
    <property type="match status" value="1"/>
</dbReference>
<dbReference type="PANTHER" id="PTHR28133:SF1">
    <property type="entry name" value="REQUIRED FOR RESPIRATORY GROWTH PROTEIN 7, MITOCHONDRIAL"/>
    <property type="match status" value="1"/>
</dbReference>
<dbReference type="Pfam" id="PF10356">
    <property type="entry name" value="RRG7"/>
    <property type="match status" value="1"/>
</dbReference>